<comment type="function">
    <text evidence="1">Murein-degrading enzyme that degrades murein glycan strands and insoluble, high-molecular weight murein sacculi, with the concomitant formation of a 1,6-anhydromuramoyl product. Lytic transglycosylases (LTs) play an integral role in the metabolism of the peptidoglycan (PG) sacculus. Their lytic action creates space within the PG sacculus to allow for its expansion as well as for the insertion of various structures such as secretion systems and flagella.</text>
</comment>
<comment type="catalytic activity">
    <reaction evidence="1">
        <text>Exolytic cleavage of the (1-&gt;4)-beta-glycosidic linkage between N-acetylmuramic acid (MurNAc) and N-acetylglucosamine (GlcNAc) residues in peptidoglycan, from either the reducing or the non-reducing ends of the peptidoglycan chains, with concomitant formation of a 1,6-anhydrobond in the MurNAc residue.</text>
        <dbReference type="EC" id="4.2.2.n1"/>
    </reaction>
</comment>
<comment type="subcellular location">
    <subcellularLocation>
        <location>Cell outer membrane</location>
        <topology>Peripheral membrane protein</topology>
    </subcellularLocation>
    <text evidence="1">Attached to the inner leaflet of the outer membrane.</text>
</comment>
<comment type="domain">
    <text evidence="1">The N-terminal domain does not have lytic activity and probably modulates enzymatic activity. The C-terminal domain is the catalytic active domain.</text>
</comment>
<comment type="similarity">
    <text evidence="1">In the N-terminal section; belongs to the bacterial solute-binding protein 3 family.</text>
</comment>
<comment type="similarity">
    <text evidence="1">In the C-terminal section; belongs to the transglycosylase Slt family.</text>
</comment>
<keyword id="KW-0998">Cell outer membrane</keyword>
<keyword id="KW-0961">Cell wall biogenesis/degradation</keyword>
<keyword id="KW-0456">Lyase</keyword>
<keyword id="KW-0472">Membrane</keyword>
<keyword id="KW-0732">Signal</keyword>
<dbReference type="EC" id="4.2.2.n1" evidence="1"/>
<dbReference type="EMBL" id="CP000886">
    <property type="protein sequence ID" value="ABX65795.1"/>
    <property type="molecule type" value="Genomic_DNA"/>
</dbReference>
<dbReference type="RefSeq" id="WP_000734252.1">
    <property type="nucleotide sequence ID" value="NC_010102.1"/>
</dbReference>
<dbReference type="SMR" id="A9N1U5"/>
<dbReference type="CAZy" id="GH23">
    <property type="family name" value="Glycoside Hydrolase Family 23"/>
</dbReference>
<dbReference type="KEGG" id="spq:SPAB_00359"/>
<dbReference type="PATRIC" id="fig|1016998.12.peg.341"/>
<dbReference type="HOGENOM" id="CLU_027494_0_1_6"/>
<dbReference type="BioCyc" id="SENT1016998:SPAB_RS01480-MONOMER"/>
<dbReference type="Proteomes" id="UP000008556">
    <property type="component" value="Chromosome"/>
</dbReference>
<dbReference type="GO" id="GO:0009279">
    <property type="term" value="C:cell outer membrane"/>
    <property type="evidence" value="ECO:0007669"/>
    <property type="project" value="UniProtKB-SubCell"/>
</dbReference>
<dbReference type="GO" id="GO:0008933">
    <property type="term" value="F:peptidoglycan lytic transglycosylase activity"/>
    <property type="evidence" value="ECO:0007669"/>
    <property type="project" value="UniProtKB-UniRule"/>
</dbReference>
<dbReference type="GO" id="GO:0016998">
    <property type="term" value="P:cell wall macromolecule catabolic process"/>
    <property type="evidence" value="ECO:0007669"/>
    <property type="project" value="UniProtKB-UniRule"/>
</dbReference>
<dbReference type="GO" id="GO:0071555">
    <property type="term" value="P:cell wall organization"/>
    <property type="evidence" value="ECO:0007669"/>
    <property type="project" value="UniProtKB-KW"/>
</dbReference>
<dbReference type="GO" id="GO:0009253">
    <property type="term" value="P:peptidoglycan catabolic process"/>
    <property type="evidence" value="ECO:0007669"/>
    <property type="project" value="TreeGrafter"/>
</dbReference>
<dbReference type="CDD" id="cd13403">
    <property type="entry name" value="MLTF-like"/>
    <property type="match status" value="1"/>
</dbReference>
<dbReference type="CDD" id="cd01009">
    <property type="entry name" value="PBP2_YfhD_N"/>
    <property type="match status" value="1"/>
</dbReference>
<dbReference type="FunFam" id="1.10.530.10:FF:000003">
    <property type="entry name" value="Membrane-bound lytic murein transglycosylase F"/>
    <property type="match status" value="1"/>
</dbReference>
<dbReference type="FunFam" id="3.40.190.10:FF:000051">
    <property type="entry name" value="Membrane-bound lytic murein transglycosylase F"/>
    <property type="match status" value="1"/>
</dbReference>
<dbReference type="Gene3D" id="1.10.530.10">
    <property type="match status" value="1"/>
</dbReference>
<dbReference type="Gene3D" id="3.40.190.10">
    <property type="entry name" value="Periplasmic binding protein-like II"/>
    <property type="match status" value="2"/>
</dbReference>
<dbReference type="HAMAP" id="MF_02016">
    <property type="entry name" value="MltF"/>
    <property type="match status" value="1"/>
</dbReference>
<dbReference type="InterPro" id="IPR023346">
    <property type="entry name" value="Lysozyme-like_dom_sf"/>
</dbReference>
<dbReference type="InterPro" id="IPR023703">
    <property type="entry name" value="MltF"/>
</dbReference>
<dbReference type="InterPro" id="IPR001638">
    <property type="entry name" value="Solute-binding_3/MltF_N"/>
</dbReference>
<dbReference type="InterPro" id="IPR000189">
    <property type="entry name" value="Transglyc_AS"/>
</dbReference>
<dbReference type="InterPro" id="IPR008258">
    <property type="entry name" value="Transglycosylase_SLT_dom_1"/>
</dbReference>
<dbReference type="NCBIfam" id="NF008112">
    <property type="entry name" value="PRK10859.1"/>
    <property type="match status" value="1"/>
</dbReference>
<dbReference type="PANTHER" id="PTHR35936">
    <property type="entry name" value="MEMBRANE-BOUND LYTIC MUREIN TRANSGLYCOSYLASE F"/>
    <property type="match status" value="1"/>
</dbReference>
<dbReference type="PANTHER" id="PTHR35936:SF32">
    <property type="entry name" value="MEMBRANE-BOUND LYTIC MUREIN TRANSGLYCOSYLASE F"/>
    <property type="match status" value="1"/>
</dbReference>
<dbReference type="Pfam" id="PF00497">
    <property type="entry name" value="SBP_bac_3"/>
    <property type="match status" value="1"/>
</dbReference>
<dbReference type="Pfam" id="PF01464">
    <property type="entry name" value="SLT"/>
    <property type="match status" value="1"/>
</dbReference>
<dbReference type="SMART" id="SM00062">
    <property type="entry name" value="PBPb"/>
    <property type="match status" value="1"/>
</dbReference>
<dbReference type="SUPFAM" id="SSF53955">
    <property type="entry name" value="Lysozyme-like"/>
    <property type="match status" value="1"/>
</dbReference>
<dbReference type="SUPFAM" id="SSF53850">
    <property type="entry name" value="Periplasmic binding protein-like II"/>
    <property type="match status" value="1"/>
</dbReference>
<dbReference type="PROSITE" id="PS00922">
    <property type="entry name" value="TRANSGLYCOSYLASE"/>
    <property type="match status" value="1"/>
</dbReference>
<evidence type="ECO:0000255" key="1">
    <source>
        <dbReference type="HAMAP-Rule" id="MF_02016"/>
    </source>
</evidence>
<feature type="signal peptide" evidence="1">
    <location>
        <begin position="1"/>
        <end position="30"/>
    </location>
</feature>
<feature type="chain" id="PRO_0000353973" description="Membrane-bound lytic murein transglycosylase F">
    <location>
        <begin position="31"/>
        <end position="514"/>
    </location>
</feature>
<feature type="region of interest" description="Non-LT domain" evidence="1">
    <location>
        <begin position="31"/>
        <end position="269"/>
    </location>
</feature>
<feature type="region of interest" description="LT domain" evidence="1">
    <location>
        <begin position="270"/>
        <end position="514"/>
    </location>
</feature>
<feature type="active site" evidence="1">
    <location>
        <position position="314"/>
    </location>
</feature>
<protein>
    <recommendedName>
        <fullName evidence="1">Membrane-bound lytic murein transglycosylase F</fullName>
        <ecNumber evidence="1">4.2.2.n1</ecNumber>
    </recommendedName>
    <alternativeName>
        <fullName evidence="1">Murein lyase F</fullName>
    </alternativeName>
</protein>
<proteinExistence type="inferred from homology"/>
<accession>A9N1U5</accession>
<organism>
    <name type="scientific">Salmonella paratyphi B (strain ATCC BAA-1250 / SPB7)</name>
    <dbReference type="NCBI Taxonomy" id="1016998"/>
    <lineage>
        <taxon>Bacteria</taxon>
        <taxon>Pseudomonadati</taxon>
        <taxon>Pseudomonadota</taxon>
        <taxon>Gammaproteobacteria</taxon>
        <taxon>Enterobacterales</taxon>
        <taxon>Enterobacteriaceae</taxon>
        <taxon>Salmonella</taxon>
    </lineage>
</organism>
<sequence length="514" mass="58013">MKKLKINYLFIGILTLLLAAALWPSIPWFGKTENHIAAIQARGVLRVSTIDSPLTYSVINGKKYGLDYELAQQFANYLGVKLKVTVRQNISQLFDDLDSGNADLLAAGLVYDSARVKNYQPGPMYYSVSQQLVYRVGQYRPRSLATVNENQLTIAPGHVVVNDLQRLKETKFPDLSWKVDDKKGSTTLLEEVISGKLDYTIADSVAISLFQRVHPELAVALDVTDEQPVTWFSRLDDDNTLSAALLDFFNSINEDGSLARIEEKYLGHGDDFDYVDTRSFLRAVDNVLPELEPLFKKYAKEIDWRLLAAISYQESHWDPLATSPTGVRGLMMLTKNTAQSLGLTDRTDAEQSISGGARYLEDMMAKVPETVPEDERIWFALAAYNMGYAHMLDARSLTVKTKGNPDSWTDVKQRLPLLSQKPYYSKLTYGYARGHEAYAYVENIRKYQISLVGYLQEKEKQEAEAMKLAQDYPAVSPEELNKAPFPFLSFLSQSSGYLTHSPSLLFTPQKKEEK</sequence>
<reference key="1">
    <citation type="submission" date="2007-11" db="EMBL/GenBank/DDBJ databases">
        <authorList>
            <consortium name="The Salmonella enterica serovar Paratyphi B Genome Sequencing Project"/>
            <person name="McClelland M."/>
            <person name="Sanderson E.K."/>
            <person name="Porwollik S."/>
            <person name="Spieth J."/>
            <person name="Clifton W.S."/>
            <person name="Fulton R."/>
            <person name="Cordes M."/>
            <person name="Wollam A."/>
            <person name="Shah N."/>
            <person name="Pepin K."/>
            <person name="Bhonagiri V."/>
            <person name="Nash W."/>
            <person name="Johnson M."/>
            <person name="Thiruvilangam P."/>
            <person name="Wilson R."/>
        </authorList>
    </citation>
    <scope>NUCLEOTIDE SEQUENCE [LARGE SCALE GENOMIC DNA]</scope>
    <source>
        <strain>ATCC BAA-1250 / SPB7</strain>
    </source>
</reference>
<name>MLTF_SALPB</name>
<gene>
    <name evidence="1" type="primary">mltF</name>
    <name type="ordered locus">SPAB_00359</name>
</gene>